<name>GP151_RAT</name>
<reference key="1">
    <citation type="journal article" date="2003" name="Brain Res. Mol. Brain Res.">
        <title>Cloning of a novel orphan G protein-coupled receptor (GPCR-2037): in situ hybridization reveals high mRNA expression in rat brain restricted to neurons of the habenular complex.</title>
        <authorList>
            <person name="Berthold M."/>
            <person name="Collin M."/>
            <person name="Sejlitz T."/>
            <person name="Meister B."/>
            <person name="Lind P."/>
        </authorList>
    </citation>
    <scope>NUCLEOTIDE SEQUENCE [MRNA]</scope>
    <source>
        <strain>Sprague-Dawley</strain>
        <tissue>Brain</tissue>
    </source>
</reference>
<dbReference type="EMBL" id="AJ564168">
    <property type="protein sequence ID" value="CAD91897.1"/>
    <property type="molecule type" value="mRNA"/>
</dbReference>
<dbReference type="RefSeq" id="NP_853664.1">
    <property type="nucleotide sequence ID" value="NM_181633.2"/>
</dbReference>
<dbReference type="SMR" id="Q7TSN5"/>
<dbReference type="FunCoup" id="Q7TSN5">
    <property type="interactions" value="52"/>
</dbReference>
<dbReference type="STRING" id="10116.ENSRNOP00000043810"/>
<dbReference type="GlyCosmos" id="Q7TSN5">
    <property type="glycosylation" value="1 site, No reported glycans"/>
</dbReference>
<dbReference type="GlyGen" id="Q7TSN5">
    <property type="glycosylation" value="1 site"/>
</dbReference>
<dbReference type="PhosphoSitePlus" id="Q7TSN5"/>
<dbReference type="PaxDb" id="10116-ENSRNOP00000043810"/>
<dbReference type="Ensembl" id="ENSRNOT00000043544.4">
    <property type="protein sequence ID" value="ENSRNOP00000043810.3"/>
    <property type="gene ID" value="ENSRNOG00000027103.5"/>
</dbReference>
<dbReference type="GeneID" id="307475"/>
<dbReference type="KEGG" id="rno:307475"/>
<dbReference type="UCSC" id="RGD:727873">
    <property type="organism name" value="rat"/>
</dbReference>
<dbReference type="AGR" id="RGD:727873"/>
<dbReference type="CTD" id="134391"/>
<dbReference type="RGD" id="727873">
    <property type="gene designation" value="Gpr151"/>
</dbReference>
<dbReference type="eggNOG" id="KOG3656">
    <property type="taxonomic scope" value="Eukaryota"/>
</dbReference>
<dbReference type="GeneTree" id="ENSGT01030000234518"/>
<dbReference type="HOGENOM" id="CLU_053982_0_0_1"/>
<dbReference type="InParanoid" id="Q7TSN5"/>
<dbReference type="OMA" id="CTIWSVL"/>
<dbReference type="OrthoDB" id="9009799at2759"/>
<dbReference type="PhylomeDB" id="Q7TSN5"/>
<dbReference type="TreeFam" id="TF332591"/>
<dbReference type="PRO" id="PR:Q7TSN5"/>
<dbReference type="Proteomes" id="UP000002494">
    <property type="component" value="Chromosome 18"/>
</dbReference>
<dbReference type="Bgee" id="ENSRNOG00000027103">
    <property type="expression patterns" value="Expressed in spleen and 8 other cell types or tissues"/>
</dbReference>
<dbReference type="GO" id="GO:0098981">
    <property type="term" value="C:cholinergic synapse"/>
    <property type="evidence" value="ECO:0000266"/>
    <property type="project" value="RGD"/>
</dbReference>
<dbReference type="GO" id="GO:0005886">
    <property type="term" value="C:plasma membrane"/>
    <property type="evidence" value="ECO:0000318"/>
    <property type="project" value="GO_Central"/>
</dbReference>
<dbReference type="GO" id="GO:0042734">
    <property type="term" value="C:presynaptic membrane"/>
    <property type="evidence" value="ECO:0000266"/>
    <property type="project" value="RGD"/>
</dbReference>
<dbReference type="GO" id="GO:0030672">
    <property type="term" value="C:synaptic vesicle membrane"/>
    <property type="evidence" value="ECO:0000266"/>
    <property type="project" value="RGD"/>
</dbReference>
<dbReference type="GO" id="GO:0004930">
    <property type="term" value="F:G protein-coupled receptor activity"/>
    <property type="evidence" value="ECO:0000266"/>
    <property type="project" value="RGD"/>
</dbReference>
<dbReference type="GO" id="GO:0042802">
    <property type="term" value="F:identical protein binding"/>
    <property type="evidence" value="ECO:0000266"/>
    <property type="project" value="RGD"/>
</dbReference>
<dbReference type="GO" id="GO:0007186">
    <property type="term" value="P:G protein-coupled receptor signaling pathway"/>
    <property type="evidence" value="ECO:0000266"/>
    <property type="project" value="RGD"/>
</dbReference>
<dbReference type="GO" id="GO:2000300">
    <property type="term" value="P:regulation of synaptic vesicle exocytosis"/>
    <property type="evidence" value="ECO:0000266"/>
    <property type="project" value="RGD"/>
</dbReference>
<dbReference type="GO" id="GO:0010447">
    <property type="term" value="P:response to acidic pH"/>
    <property type="evidence" value="ECO:0000266"/>
    <property type="project" value="RGD"/>
</dbReference>
<dbReference type="CDD" id="cd15002">
    <property type="entry name" value="7tmA_GPR151"/>
    <property type="match status" value="1"/>
</dbReference>
<dbReference type="FunFam" id="1.20.1070.10:FF:000215">
    <property type="entry name" value="G protein-coupled receptor 151"/>
    <property type="match status" value="1"/>
</dbReference>
<dbReference type="Gene3D" id="1.20.1070.10">
    <property type="entry name" value="Rhodopsin 7-helix transmembrane proteins"/>
    <property type="match status" value="1"/>
</dbReference>
<dbReference type="InterPro" id="IPR000276">
    <property type="entry name" value="GPCR_Rhodpsn"/>
</dbReference>
<dbReference type="InterPro" id="IPR017452">
    <property type="entry name" value="GPCR_Rhodpsn_7TM"/>
</dbReference>
<dbReference type="PANTHER" id="PTHR45695:SF1">
    <property type="entry name" value="G-PROTEIN COUPLED RECEPTOR 151"/>
    <property type="match status" value="1"/>
</dbReference>
<dbReference type="PANTHER" id="PTHR45695">
    <property type="entry name" value="LEUCOKININ RECEPTOR-RELATED"/>
    <property type="match status" value="1"/>
</dbReference>
<dbReference type="Pfam" id="PF00001">
    <property type="entry name" value="7tm_1"/>
    <property type="match status" value="1"/>
</dbReference>
<dbReference type="PRINTS" id="PR00237">
    <property type="entry name" value="GPCRRHODOPSN"/>
</dbReference>
<dbReference type="SUPFAM" id="SSF81321">
    <property type="entry name" value="Family A G protein-coupled receptor-like"/>
    <property type="match status" value="1"/>
</dbReference>
<dbReference type="PROSITE" id="PS50262">
    <property type="entry name" value="G_PROTEIN_RECEP_F1_2"/>
    <property type="match status" value="1"/>
</dbReference>
<evidence type="ECO:0000255" key="1"/>
<evidence type="ECO:0000255" key="2">
    <source>
        <dbReference type="PROSITE-ProRule" id="PRU00521"/>
    </source>
</evidence>
<evidence type="ECO:0000256" key="3">
    <source>
        <dbReference type="SAM" id="MobiDB-lite"/>
    </source>
</evidence>
<gene>
    <name type="primary">Gpr151</name>
</gene>
<feature type="chain" id="PRO_0000069634" description="Probable G-protein coupled receptor 151">
    <location>
        <begin position="1"/>
        <end position="421"/>
    </location>
</feature>
<feature type="topological domain" description="Extracellular" evidence="1">
    <location>
        <begin position="1"/>
        <end position="44"/>
    </location>
</feature>
<feature type="transmembrane region" description="Helical; Name=1" evidence="1">
    <location>
        <begin position="45"/>
        <end position="65"/>
    </location>
</feature>
<feature type="topological domain" description="Cytoplasmic" evidence="1">
    <location>
        <begin position="66"/>
        <end position="74"/>
    </location>
</feature>
<feature type="transmembrane region" description="Helical; Name=2" evidence="1">
    <location>
        <begin position="75"/>
        <end position="95"/>
    </location>
</feature>
<feature type="topological domain" description="Extracellular" evidence="1">
    <location>
        <begin position="96"/>
        <end position="122"/>
    </location>
</feature>
<feature type="transmembrane region" description="Helical; Name=3" evidence="1">
    <location>
        <begin position="123"/>
        <end position="143"/>
    </location>
</feature>
<feature type="topological domain" description="Cytoplasmic" evidence="1">
    <location>
        <begin position="144"/>
        <end position="156"/>
    </location>
</feature>
<feature type="transmembrane region" description="Helical; Name=4" evidence="1">
    <location>
        <begin position="157"/>
        <end position="177"/>
    </location>
</feature>
<feature type="topological domain" description="Extracellular" evidence="1">
    <location>
        <begin position="178"/>
        <end position="204"/>
    </location>
</feature>
<feature type="transmembrane region" description="Helical; Name=5" evidence="1">
    <location>
        <begin position="205"/>
        <end position="225"/>
    </location>
</feature>
<feature type="topological domain" description="Cytoplasmic" evidence="1">
    <location>
        <begin position="226"/>
        <end position="258"/>
    </location>
</feature>
<feature type="transmembrane region" description="Helical; Name=6" evidence="1">
    <location>
        <begin position="259"/>
        <end position="279"/>
    </location>
</feature>
<feature type="topological domain" description="Extracellular" evidence="1">
    <location>
        <begin position="280"/>
        <end position="289"/>
    </location>
</feature>
<feature type="transmembrane region" description="Helical; Name=7" evidence="1">
    <location>
        <begin position="290"/>
        <end position="310"/>
    </location>
</feature>
<feature type="topological domain" description="Cytoplasmic" evidence="1">
    <location>
        <begin position="311"/>
        <end position="421"/>
    </location>
</feature>
<feature type="region of interest" description="Disordered" evidence="3">
    <location>
        <begin position="346"/>
        <end position="381"/>
    </location>
</feature>
<feature type="region of interest" description="Disordered" evidence="3">
    <location>
        <begin position="394"/>
        <end position="421"/>
    </location>
</feature>
<feature type="compositionally biased region" description="Basic and acidic residues" evidence="3">
    <location>
        <begin position="364"/>
        <end position="379"/>
    </location>
</feature>
<feature type="compositionally biased region" description="Basic and acidic residues" evidence="3">
    <location>
        <begin position="409"/>
        <end position="421"/>
    </location>
</feature>
<feature type="glycosylation site" description="N-linked (GlcNAc...) asparagine" evidence="1">
    <location>
        <position position="18"/>
    </location>
</feature>
<feature type="disulfide bond" evidence="2">
    <location>
        <begin position="114"/>
        <end position="190"/>
    </location>
</feature>
<sequence length="421" mass="46724">MGKATLAVFADSDSSNMNESFAHLHFAGGYLPSDSKGWRTIIPSLLAAVCLVGFVGNLCVIGLLLHGVWKRKPSMIHSLILNLSLADISLLLFSAPVRATAYVKGVWDLGWFVCKSSDWFTHMCMAAKSLTFVVVAKVCFMYASDPAKPVGTHNCTIWSLLGAIWVVASLLPLPEWFFSTTRHHAGVEMCLVDVPAVAAEFMSLFGKLYPLLVFCLPLLLAGFYFWRAYNQCKIRCAKTQNLRNQMRSKQLTVMLLSTAVTSALLWLPEWIAWLWVWHLKAGGPMPPQGFIALSQVLMFSISTVNPLIFLMMSEEFKAGLKGIWKWMITRKPVVTSEVQEVPAGNIETLPGKAPSPETQTCIPDTDRCGSPDSSKETTDKVMVPILPDVEQFWHERDVGPSAQDNDPIPWEHEGQETKGCN</sequence>
<proteinExistence type="evidence at transcript level"/>
<accession>Q7TSN5</accession>
<protein>
    <recommendedName>
        <fullName>Probable G-protein coupled receptor 151</fullName>
    </recommendedName>
    <alternativeName>
        <fullName>GPCR-2037</fullName>
    </alternativeName>
</protein>
<organism>
    <name type="scientific">Rattus norvegicus</name>
    <name type="common">Rat</name>
    <dbReference type="NCBI Taxonomy" id="10116"/>
    <lineage>
        <taxon>Eukaryota</taxon>
        <taxon>Metazoa</taxon>
        <taxon>Chordata</taxon>
        <taxon>Craniata</taxon>
        <taxon>Vertebrata</taxon>
        <taxon>Euteleostomi</taxon>
        <taxon>Mammalia</taxon>
        <taxon>Eutheria</taxon>
        <taxon>Euarchontoglires</taxon>
        <taxon>Glires</taxon>
        <taxon>Rodentia</taxon>
        <taxon>Myomorpha</taxon>
        <taxon>Muroidea</taxon>
        <taxon>Muridae</taxon>
        <taxon>Murinae</taxon>
        <taxon>Rattus</taxon>
    </lineage>
</organism>
<keyword id="KW-1003">Cell membrane</keyword>
<keyword id="KW-1015">Disulfide bond</keyword>
<keyword id="KW-0297">G-protein coupled receptor</keyword>
<keyword id="KW-0325">Glycoprotein</keyword>
<keyword id="KW-0472">Membrane</keyword>
<keyword id="KW-0675">Receptor</keyword>
<keyword id="KW-1185">Reference proteome</keyword>
<keyword id="KW-0807">Transducer</keyword>
<keyword id="KW-0812">Transmembrane</keyword>
<keyword id="KW-1133">Transmembrane helix</keyword>
<comment type="function">
    <text>Orphan receptor.</text>
</comment>
<comment type="subcellular location">
    <subcellularLocation>
        <location>Cell membrane</location>
        <topology>Multi-pass membrane protein</topology>
    </subcellularLocation>
</comment>
<comment type="tissue specificity">
    <text>Exclusively expressed in neurons of the habenular complex. The expression is particularly prominent in the medial habenular nucleus, whereas the lateral habenular nucleus exhibited a lower level of expression.</text>
</comment>
<comment type="similarity">
    <text evidence="2">Belongs to the G-protein coupled receptor 1 family.</text>
</comment>